<reference key="1">
    <citation type="submission" date="2003-03" db="EMBL/GenBank/DDBJ databases">
        <title>The complete genome sequence of Neisseria gonorrhoeae.</title>
        <authorList>
            <person name="Lewis L.A."/>
            <person name="Gillaspy A.F."/>
            <person name="McLaughlin R.E."/>
            <person name="Gipson M."/>
            <person name="Ducey T.F."/>
            <person name="Ownbey T."/>
            <person name="Hartman K."/>
            <person name="Nydick C."/>
            <person name="Carson M.B."/>
            <person name="Vaughn J."/>
            <person name="Thomson C."/>
            <person name="Song L."/>
            <person name="Lin S."/>
            <person name="Yuan X."/>
            <person name="Najar F."/>
            <person name="Zhan M."/>
            <person name="Ren Q."/>
            <person name="Zhu H."/>
            <person name="Qi S."/>
            <person name="Kenton S.M."/>
            <person name="Lai H."/>
            <person name="White J.D."/>
            <person name="Clifton S."/>
            <person name="Roe B.A."/>
            <person name="Dyer D.W."/>
        </authorList>
    </citation>
    <scope>NUCLEOTIDE SEQUENCE [LARGE SCALE GENOMIC DNA]</scope>
    <source>
        <strain>ATCC 700825 / FA 1090</strain>
    </source>
</reference>
<organism>
    <name type="scientific">Neisseria gonorrhoeae (strain ATCC 700825 / FA 1090)</name>
    <dbReference type="NCBI Taxonomy" id="242231"/>
    <lineage>
        <taxon>Bacteria</taxon>
        <taxon>Pseudomonadati</taxon>
        <taxon>Pseudomonadota</taxon>
        <taxon>Betaproteobacteria</taxon>
        <taxon>Neisseriales</taxon>
        <taxon>Neisseriaceae</taxon>
        <taxon>Neisseria</taxon>
    </lineage>
</organism>
<accession>Q5FAC0</accession>
<feature type="chain" id="PRO_0000241008" description="S-adenosylmethionine synthase">
    <location>
        <begin position="1"/>
        <end position="389"/>
    </location>
</feature>
<feature type="region of interest" description="Flexible loop" evidence="1">
    <location>
        <begin position="99"/>
        <end position="109"/>
    </location>
</feature>
<feature type="binding site" description="in other chain" evidence="1">
    <location>
        <position position="15"/>
    </location>
    <ligand>
        <name>ATP</name>
        <dbReference type="ChEBI" id="CHEBI:30616"/>
        <note>ligand shared between two neighboring subunits</note>
    </ligand>
</feature>
<feature type="binding site" evidence="1">
    <location>
        <position position="17"/>
    </location>
    <ligand>
        <name>Mg(2+)</name>
        <dbReference type="ChEBI" id="CHEBI:18420"/>
    </ligand>
</feature>
<feature type="binding site" evidence="1">
    <location>
        <position position="43"/>
    </location>
    <ligand>
        <name>K(+)</name>
        <dbReference type="ChEBI" id="CHEBI:29103"/>
    </ligand>
</feature>
<feature type="binding site" description="in other chain" evidence="1">
    <location>
        <position position="56"/>
    </location>
    <ligand>
        <name>L-methionine</name>
        <dbReference type="ChEBI" id="CHEBI:57844"/>
        <note>ligand shared between two neighboring subunits</note>
    </ligand>
</feature>
<feature type="binding site" description="in other chain" evidence="1">
    <location>
        <position position="99"/>
    </location>
    <ligand>
        <name>L-methionine</name>
        <dbReference type="ChEBI" id="CHEBI:57844"/>
        <note>ligand shared between two neighboring subunits</note>
    </ligand>
</feature>
<feature type="binding site" description="in other chain" evidence="1">
    <location>
        <begin position="166"/>
        <end position="168"/>
    </location>
    <ligand>
        <name>ATP</name>
        <dbReference type="ChEBI" id="CHEBI:30616"/>
        <note>ligand shared between two neighboring subunits</note>
    </ligand>
</feature>
<feature type="binding site" description="in other chain" evidence="1">
    <location>
        <begin position="234"/>
        <end position="235"/>
    </location>
    <ligand>
        <name>ATP</name>
        <dbReference type="ChEBI" id="CHEBI:30616"/>
        <note>ligand shared between two neighboring subunits</note>
    </ligand>
</feature>
<feature type="binding site" evidence="1">
    <location>
        <position position="243"/>
    </location>
    <ligand>
        <name>ATP</name>
        <dbReference type="ChEBI" id="CHEBI:30616"/>
        <note>ligand shared between two neighboring subunits</note>
    </ligand>
</feature>
<feature type="binding site" evidence="1">
    <location>
        <position position="243"/>
    </location>
    <ligand>
        <name>L-methionine</name>
        <dbReference type="ChEBI" id="CHEBI:57844"/>
        <note>ligand shared between two neighboring subunits</note>
    </ligand>
</feature>
<feature type="binding site" description="in other chain" evidence="1">
    <location>
        <begin position="249"/>
        <end position="250"/>
    </location>
    <ligand>
        <name>ATP</name>
        <dbReference type="ChEBI" id="CHEBI:30616"/>
        <note>ligand shared between two neighboring subunits</note>
    </ligand>
</feature>
<feature type="binding site" evidence="1">
    <location>
        <position position="266"/>
    </location>
    <ligand>
        <name>ATP</name>
        <dbReference type="ChEBI" id="CHEBI:30616"/>
        <note>ligand shared between two neighboring subunits</note>
    </ligand>
</feature>
<feature type="binding site" evidence="1">
    <location>
        <position position="270"/>
    </location>
    <ligand>
        <name>ATP</name>
        <dbReference type="ChEBI" id="CHEBI:30616"/>
        <note>ligand shared between two neighboring subunits</note>
    </ligand>
</feature>
<feature type="binding site" description="in other chain" evidence="1">
    <location>
        <position position="274"/>
    </location>
    <ligand>
        <name>L-methionine</name>
        <dbReference type="ChEBI" id="CHEBI:57844"/>
        <note>ligand shared between two neighboring subunits</note>
    </ligand>
</feature>
<feature type="strand" evidence="2">
    <location>
        <begin position="3"/>
        <end position="11"/>
    </location>
</feature>
<feature type="helix" evidence="2">
    <location>
        <begin position="16"/>
        <end position="34"/>
    </location>
</feature>
<feature type="strand" evidence="2">
    <location>
        <begin position="39"/>
        <end position="47"/>
    </location>
</feature>
<feature type="strand" evidence="2">
    <location>
        <begin position="50"/>
        <end position="58"/>
    </location>
</feature>
<feature type="helix" evidence="2">
    <location>
        <begin position="65"/>
        <end position="76"/>
    </location>
</feature>
<feature type="helix" evidence="2">
    <location>
        <begin position="81"/>
        <end position="83"/>
    </location>
</feature>
<feature type="helix" evidence="2">
    <location>
        <begin position="87"/>
        <end position="89"/>
    </location>
</feature>
<feature type="strand" evidence="2">
    <location>
        <begin position="91"/>
        <end position="94"/>
    </location>
</feature>
<feature type="helix" evidence="2">
    <location>
        <begin position="101"/>
        <end position="107"/>
    </location>
</feature>
<feature type="strand" evidence="2">
    <location>
        <begin position="111"/>
        <end position="116"/>
    </location>
</feature>
<feature type="strand" evidence="2">
    <location>
        <begin position="119"/>
        <end position="121"/>
    </location>
</feature>
<feature type="strand" evidence="2">
    <location>
        <begin position="123"/>
        <end position="133"/>
    </location>
</feature>
<feature type="helix" evidence="2">
    <location>
        <begin position="139"/>
        <end position="156"/>
    </location>
</feature>
<feature type="strand" evidence="2">
    <location>
        <begin position="163"/>
        <end position="176"/>
    </location>
</feature>
<feature type="turn" evidence="2">
    <location>
        <begin position="177"/>
        <end position="179"/>
    </location>
</feature>
<feature type="strand" evidence="2">
    <location>
        <begin position="182"/>
        <end position="194"/>
    </location>
</feature>
<feature type="helix" evidence="2">
    <location>
        <begin position="200"/>
        <end position="210"/>
    </location>
</feature>
<feature type="helix" evidence="2">
    <location>
        <begin position="212"/>
        <end position="215"/>
    </location>
</feature>
<feature type="helix" evidence="2">
    <location>
        <begin position="218"/>
        <end position="220"/>
    </location>
</feature>
<feature type="strand" evidence="2">
    <location>
        <begin position="226"/>
        <end position="230"/>
    </location>
</feature>
<feature type="helix" evidence="2">
    <location>
        <begin position="239"/>
        <end position="242"/>
    </location>
</feature>
<feature type="turn" evidence="2">
    <location>
        <begin position="251"/>
        <end position="258"/>
    </location>
</feature>
<feature type="helix" evidence="2">
    <location>
        <begin position="275"/>
        <end position="292"/>
    </location>
</feature>
<feature type="strand" evidence="2">
    <location>
        <begin position="297"/>
        <end position="305"/>
    </location>
</feature>
<feature type="strand" evidence="2">
    <location>
        <begin position="313"/>
        <end position="318"/>
    </location>
</feature>
<feature type="helix" evidence="2">
    <location>
        <begin position="327"/>
        <end position="337"/>
    </location>
</feature>
<feature type="helix" evidence="2">
    <location>
        <begin position="342"/>
        <end position="349"/>
    </location>
</feature>
<feature type="strand" evidence="2">
    <location>
        <begin position="352"/>
        <end position="354"/>
    </location>
</feature>
<feature type="helix" evidence="2">
    <location>
        <begin position="357"/>
        <end position="360"/>
    </location>
</feature>
<feature type="strand" evidence="2">
    <location>
        <begin position="364"/>
        <end position="366"/>
    </location>
</feature>
<feature type="helix" evidence="2">
    <location>
        <begin position="373"/>
        <end position="375"/>
    </location>
</feature>
<feature type="helix" evidence="2">
    <location>
        <begin position="380"/>
        <end position="386"/>
    </location>
</feature>
<gene>
    <name evidence="1" type="primary">metK</name>
    <name type="ordered locus">NGO_0106</name>
</gene>
<dbReference type="EC" id="2.5.1.6" evidence="1"/>
<dbReference type="EMBL" id="AE004969">
    <property type="protein sequence ID" value="AAW88867.2"/>
    <property type="molecule type" value="Genomic_DNA"/>
</dbReference>
<dbReference type="RefSeq" id="WP_003704903.1">
    <property type="nucleotide sequence ID" value="NC_002946.2"/>
</dbReference>
<dbReference type="RefSeq" id="YP_207279.2">
    <property type="nucleotide sequence ID" value="NC_002946.2"/>
</dbReference>
<dbReference type="PDB" id="5T8S">
    <property type="method" value="X-ray"/>
    <property type="resolution" value="1.70 A"/>
    <property type="chains" value="A/B=1-389"/>
</dbReference>
<dbReference type="PDB" id="5T8T">
    <property type="method" value="X-ray"/>
    <property type="resolution" value="2.10 A"/>
    <property type="chains" value="A/B=1-389"/>
</dbReference>
<dbReference type="PDBsum" id="5T8S"/>
<dbReference type="PDBsum" id="5T8T"/>
<dbReference type="SMR" id="Q5FAC0"/>
<dbReference type="STRING" id="242231.NGO_0106"/>
<dbReference type="KEGG" id="ngo:NGO_0106"/>
<dbReference type="PATRIC" id="fig|242231.10.peg.139"/>
<dbReference type="HOGENOM" id="CLU_041802_1_1_4"/>
<dbReference type="UniPathway" id="UPA00315">
    <property type="reaction ID" value="UER00080"/>
</dbReference>
<dbReference type="Proteomes" id="UP000000535">
    <property type="component" value="Chromosome"/>
</dbReference>
<dbReference type="GO" id="GO:0005737">
    <property type="term" value="C:cytoplasm"/>
    <property type="evidence" value="ECO:0007669"/>
    <property type="project" value="UniProtKB-SubCell"/>
</dbReference>
<dbReference type="GO" id="GO:0005524">
    <property type="term" value="F:ATP binding"/>
    <property type="evidence" value="ECO:0007669"/>
    <property type="project" value="UniProtKB-UniRule"/>
</dbReference>
<dbReference type="GO" id="GO:0000287">
    <property type="term" value="F:magnesium ion binding"/>
    <property type="evidence" value="ECO:0007669"/>
    <property type="project" value="UniProtKB-UniRule"/>
</dbReference>
<dbReference type="GO" id="GO:0004478">
    <property type="term" value="F:methionine adenosyltransferase activity"/>
    <property type="evidence" value="ECO:0007669"/>
    <property type="project" value="UniProtKB-UniRule"/>
</dbReference>
<dbReference type="GO" id="GO:0006730">
    <property type="term" value="P:one-carbon metabolic process"/>
    <property type="evidence" value="ECO:0007669"/>
    <property type="project" value="UniProtKB-KW"/>
</dbReference>
<dbReference type="GO" id="GO:0006556">
    <property type="term" value="P:S-adenosylmethionine biosynthetic process"/>
    <property type="evidence" value="ECO:0007669"/>
    <property type="project" value="UniProtKB-UniRule"/>
</dbReference>
<dbReference type="CDD" id="cd18079">
    <property type="entry name" value="S-AdoMet_synt"/>
    <property type="match status" value="1"/>
</dbReference>
<dbReference type="FunFam" id="3.30.300.10:FF:000003">
    <property type="entry name" value="S-adenosylmethionine synthase"/>
    <property type="match status" value="1"/>
</dbReference>
<dbReference type="FunFam" id="3.30.300.10:FF:000004">
    <property type="entry name" value="S-adenosylmethionine synthase"/>
    <property type="match status" value="1"/>
</dbReference>
<dbReference type="Gene3D" id="3.30.300.10">
    <property type="match status" value="3"/>
</dbReference>
<dbReference type="HAMAP" id="MF_00086">
    <property type="entry name" value="S_AdoMet_synth1"/>
    <property type="match status" value="1"/>
</dbReference>
<dbReference type="InterPro" id="IPR022631">
    <property type="entry name" value="ADOMET_SYNTHASE_CS"/>
</dbReference>
<dbReference type="InterPro" id="IPR022630">
    <property type="entry name" value="S-AdoMet_synt_C"/>
</dbReference>
<dbReference type="InterPro" id="IPR022629">
    <property type="entry name" value="S-AdoMet_synt_central"/>
</dbReference>
<dbReference type="InterPro" id="IPR022628">
    <property type="entry name" value="S-AdoMet_synt_N"/>
</dbReference>
<dbReference type="InterPro" id="IPR002133">
    <property type="entry name" value="S-AdoMet_synthetase"/>
</dbReference>
<dbReference type="InterPro" id="IPR022636">
    <property type="entry name" value="S-AdoMet_synthetase_sfam"/>
</dbReference>
<dbReference type="NCBIfam" id="TIGR01034">
    <property type="entry name" value="metK"/>
    <property type="match status" value="1"/>
</dbReference>
<dbReference type="PANTHER" id="PTHR11964">
    <property type="entry name" value="S-ADENOSYLMETHIONINE SYNTHETASE"/>
    <property type="match status" value="1"/>
</dbReference>
<dbReference type="Pfam" id="PF02773">
    <property type="entry name" value="S-AdoMet_synt_C"/>
    <property type="match status" value="1"/>
</dbReference>
<dbReference type="Pfam" id="PF02772">
    <property type="entry name" value="S-AdoMet_synt_M"/>
    <property type="match status" value="1"/>
</dbReference>
<dbReference type="Pfam" id="PF00438">
    <property type="entry name" value="S-AdoMet_synt_N"/>
    <property type="match status" value="1"/>
</dbReference>
<dbReference type="PIRSF" id="PIRSF000497">
    <property type="entry name" value="MAT"/>
    <property type="match status" value="1"/>
</dbReference>
<dbReference type="SUPFAM" id="SSF55973">
    <property type="entry name" value="S-adenosylmethionine synthetase"/>
    <property type="match status" value="3"/>
</dbReference>
<dbReference type="PROSITE" id="PS00376">
    <property type="entry name" value="ADOMET_SYNTHASE_1"/>
    <property type="match status" value="1"/>
</dbReference>
<dbReference type="PROSITE" id="PS00377">
    <property type="entry name" value="ADOMET_SYNTHASE_2"/>
    <property type="match status" value="1"/>
</dbReference>
<name>METK_NEIG1</name>
<keyword id="KW-0002">3D-structure</keyword>
<keyword id="KW-0067">ATP-binding</keyword>
<keyword id="KW-0963">Cytoplasm</keyword>
<keyword id="KW-0460">Magnesium</keyword>
<keyword id="KW-0479">Metal-binding</keyword>
<keyword id="KW-0547">Nucleotide-binding</keyword>
<keyword id="KW-0554">One-carbon metabolism</keyword>
<keyword id="KW-0630">Potassium</keyword>
<keyword id="KW-1185">Reference proteome</keyword>
<keyword id="KW-0808">Transferase</keyword>
<evidence type="ECO:0000255" key="1">
    <source>
        <dbReference type="HAMAP-Rule" id="MF_00086"/>
    </source>
</evidence>
<evidence type="ECO:0007829" key="2">
    <source>
        <dbReference type="PDB" id="5T8S"/>
    </source>
</evidence>
<comment type="function">
    <text evidence="1">Catalyzes the formation of S-adenosylmethionine (AdoMet) from methionine and ATP. The overall synthetic reaction is composed of two sequential steps, AdoMet formation and the subsequent tripolyphosphate hydrolysis which occurs prior to release of AdoMet from the enzyme.</text>
</comment>
<comment type="catalytic activity">
    <reaction evidence="1">
        <text>L-methionine + ATP + H2O = S-adenosyl-L-methionine + phosphate + diphosphate</text>
        <dbReference type="Rhea" id="RHEA:21080"/>
        <dbReference type="ChEBI" id="CHEBI:15377"/>
        <dbReference type="ChEBI" id="CHEBI:30616"/>
        <dbReference type="ChEBI" id="CHEBI:33019"/>
        <dbReference type="ChEBI" id="CHEBI:43474"/>
        <dbReference type="ChEBI" id="CHEBI:57844"/>
        <dbReference type="ChEBI" id="CHEBI:59789"/>
        <dbReference type="EC" id="2.5.1.6"/>
    </reaction>
</comment>
<comment type="cofactor">
    <cofactor evidence="1">
        <name>Mg(2+)</name>
        <dbReference type="ChEBI" id="CHEBI:18420"/>
    </cofactor>
    <text evidence="1">Binds 2 divalent ions per subunit.</text>
</comment>
<comment type="cofactor">
    <cofactor evidence="1">
        <name>K(+)</name>
        <dbReference type="ChEBI" id="CHEBI:29103"/>
    </cofactor>
    <text evidence="1">Binds 1 potassium ion per subunit.</text>
</comment>
<comment type="pathway">
    <text evidence="1">Amino-acid biosynthesis; S-adenosyl-L-methionine biosynthesis; S-adenosyl-L-methionine from L-methionine: step 1/1.</text>
</comment>
<comment type="subunit">
    <text evidence="1">Homotetramer; dimer of dimers.</text>
</comment>
<comment type="subcellular location">
    <subcellularLocation>
        <location evidence="1">Cytoplasm</location>
    </subcellularLocation>
</comment>
<comment type="similarity">
    <text evidence="1">Belongs to the AdoMet synthase family.</text>
</comment>
<proteinExistence type="evidence at protein level"/>
<sequence length="389" mass="41942">MSEYLFTSESVSEGHPDKVADQVSDAILDAILAQDPKARVAAETLVNTGLCVLAGEITTTAQVDYIKVARETIKRIGYNSSELGFDANGCAVGVYYDQQSPDIAQGVNEGEGIDLNQGAGDQGLMFGYACDETPTLMPFAIYYSHRLMQRQSELRKDGRLPWLRPDAKAQLTVVYDSETGKVKRIDTVVLSTQHDPAISQEELSKAVIEQIIKPVLPPELLTDETKYLINPTGRFVIGGPQGDCGLTGRKIIVDTYGGAAPHGGGAFSGKDPSKVDRSAAYACRYVAKNIVAAGLATQCQIQVSYAIGVAEPTSISIDTFGTGKISEEKLIALVCEHFDLRPKGIVQMLDLLRPIYGKSAAYGHFGREEPEFTWERTDKAASLKAAAGL</sequence>
<protein>
    <recommendedName>
        <fullName evidence="1">S-adenosylmethionine synthase</fullName>
        <shortName evidence="1">AdoMet synthase</shortName>
        <ecNumber evidence="1">2.5.1.6</ecNumber>
    </recommendedName>
    <alternativeName>
        <fullName evidence="1">MAT</fullName>
    </alternativeName>
    <alternativeName>
        <fullName evidence="1">Methionine adenosyltransferase</fullName>
    </alternativeName>
</protein>